<accession>P0DM80</accession>
<accession>P14147</accession>
<accession>Q9L3L1</accession>
<protein>
    <recommendedName>
        <fullName>Virulence sensor histidine kinase PhoQ</fullName>
        <ecNumber>2.7.13.3</ecNumber>
        <ecNumber>3.1.3.-</ecNumber>
    </recommendedName>
    <alternativeName>
        <fullName>Sensor histidine protein kinase/phosphatase PhoQ</fullName>
    </alternativeName>
</protein>
<reference key="1">
    <citation type="journal article" date="1989" name="Proc. Natl. Acad. Sci. U.S.A.">
        <title>A two-component regulatory system (phoP phoQ) controls Salmonella typhimurium virulence.</title>
        <authorList>
            <person name="Miller S.I."/>
            <person name="Kukral A.M."/>
            <person name="Mekalanos J.J."/>
        </authorList>
    </citation>
    <scope>NUCLEOTIDE SEQUENCE [GENOMIC DNA]</scope>
    <scope>FUNCTION IN VIRULENCE</scope>
    <scope>DISRUPTION PHENOTYPE</scope>
    <source>
        <strain>ATCC 14028 / SGSC 2980 / CDC 6516-60 / NCTC 12023</strain>
        <strain>LT2 / SGSC1412 / ATCC 700720</strain>
    </source>
</reference>
<reference key="2">
    <citation type="journal article" date="2001" name="Nature">
        <title>Complete genome sequence of Salmonella enterica serovar Typhimurium LT2.</title>
        <authorList>
            <person name="McClelland M."/>
            <person name="Sanderson K.E."/>
            <person name="Spieth J."/>
            <person name="Clifton S.W."/>
            <person name="Latreille P."/>
            <person name="Courtney L."/>
            <person name="Porwollik S."/>
            <person name="Ali J."/>
            <person name="Dante M."/>
            <person name="Du F."/>
            <person name="Hou S."/>
            <person name="Layman D."/>
            <person name="Leonard S."/>
            <person name="Nguyen C."/>
            <person name="Scott K."/>
            <person name="Holmes A."/>
            <person name="Grewal N."/>
            <person name="Mulvaney E."/>
            <person name="Ryan E."/>
            <person name="Sun H."/>
            <person name="Florea L."/>
            <person name="Miller W."/>
            <person name="Stoneking T."/>
            <person name="Nhan M."/>
            <person name="Waterston R."/>
            <person name="Wilson R.K."/>
        </authorList>
    </citation>
    <scope>NUCLEOTIDE SEQUENCE [LARGE SCALE GENOMIC DNA]</scope>
    <source>
        <strain>LT2 / SGSC1412 / ATCC 700720</strain>
    </source>
</reference>
<reference key="3">
    <citation type="journal article" date="1998" name="J. Bacteriol.">
        <title>A low pH-inducible, PhoPQ-dependent acid tolerance response protects Salmonella typhimurium against inorganic acid stress.</title>
        <authorList>
            <person name="Bearson B.L."/>
            <person name="Wilson L."/>
            <person name="Foster J.W."/>
        </authorList>
    </citation>
    <scope>FUNCTION IN ACID TOLERANCE</scope>
    <scope>DISRUPTION PHENOTYPE</scope>
    <source>
        <strain>LT2 / SGSC1412 / ATCC 700720</strain>
    </source>
</reference>
<reference key="4">
    <citation type="journal article" date="2000" name="J. Biol. Chem.">
        <title>The phosphatase activity is the target for Mg2+ regulation of the sensor protein PhoQ in Salmonella.</title>
        <authorList>
            <person name="Castelli M.E."/>
            <person name="Garcia Vescovi E."/>
            <person name="Soncini F.C."/>
        </authorList>
    </citation>
    <scope>PHOSPHATASE ACTIVITY</scope>
    <scope>ACTIVITY REGULATION</scope>
    <scope>MUTAGENESIS OF HIS-277</scope>
    <source>
        <strain>EG5172</strain>
    </source>
</reference>
<reference key="5">
    <citation type="journal article" date="2001" name="J. Bacteriol.">
        <title>Characterization of the catalytic activities of the PhoQ histidine protein kinase of Salmonella enterica serovar Typhimurium.</title>
        <authorList>
            <person name="Montagne M."/>
            <person name="Martel A."/>
            <person name="Le Moual H."/>
        </authorList>
    </citation>
    <scope>CATALYTIC ACTIVITY</scope>
    <scope>PHOSPHORYLATION AT HIS-277</scope>
    <scope>MUTAGENESIS OF HIS-277</scope>
</reference>
<reference key="6">
    <citation type="journal article" date="2003" name="J. Bacteriol.">
        <title>Mutational analysis of the residue at position 48 in the Salmonella enterica Serovar Typhimurium PhoQ sensor kinase.</title>
        <authorList>
            <person name="Sanowar S."/>
            <person name="Martel A."/>
            <person name="Le Moual H."/>
        </authorList>
    </citation>
    <scope>CATALYTIC ACTIVITY</scope>
    <scope>MUTAGENESIS OF THR-48</scope>
</reference>
<reference key="7">
    <citation type="journal article" date="2005" name="Biochem. J.">
        <title>Functional reconstitution of the Salmonella typhimurium PhoQ histidine kinase sensor in proteoliposomes.</title>
        <authorList>
            <person name="Sanowar S."/>
            <person name="Le Moual H."/>
        </authorList>
    </citation>
    <scope>FUNCTION</scope>
    <scope>ACTIVITY REGULATION</scope>
</reference>
<reference key="8">
    <citation type="journal article" date="2009" name="PLoS Pathog.">
        <title>Coordinated regulation of virulence during systemic infection of Salmonella enterica serovar Typhimurium.</title>
        <authorList>
            <person name="Yoon H."/>
            <person name="McDermott J.E."/>
            <person name="Porwollik S."/>
            <person name="McClelland M."/>
            <person name="Heffron F."/>
        </authorList>
    </citation>
    <scope>DISRUPTION PHENOTYPE</scope>
    <source>
        <strain evidence="15">14028s / SGSC 2262</strain>
    </source>
</reference>
<reference key="9">
    <citation type="journal article" date="2020" name="Cell Chem. Biol.">
        <title>Targeting Two-Component Systems Uncovers a Small-Molecule Inhibitor of Salmonella Virulence.</title>
        <authorList>
            <person name="Tsai C.N."/>
            <person name="MacNair C.R."/>
            <person name="Cao M.P.T."/>
            <person name="Perry J.N."/>
            <person name="Magolan J."/>
            <person name="Brown E.D."/>
            <person name="Coombes B.K."/>
        </authorList>
    </citation>
    <scope>DISRUPTION PHENOTYPE</scope>
</reference>
<reference key="10">
    <citation type="journal article" date="2006" name="J. Mol. Biol.">
        <title>Metal bridges between the PhoQ sensor domain and the membrane regulate transmembrane signaling.</title>
        <authorList>
            <person name="Cho U.S."/>
            <person name="Bader M.W."/>
            <person name="Amaya M.F."/>
            <person name="Daley M.E."/>
            <person name="Klevit R.E."/>
            <person name="Miller S.I."/>
            <person name="Xu W."/>
        </authorList>
    </citation>
    <scope>X-RAY CRYSTALLOGRAPHY (2.4 ANGSTROMS) OF 45-190 BOUND TO CA(2+)</scope>
    <scope>COFACTOR</scope>
    <scope>SUBUNIT</scope>
    <scope>MUTAGENESIS OF 149-ASP-ASP-150; MET-155; THR-156; HIS-157; ASP-179; GLU-184; LEU-185 AND LYS-186</scope>
</reference>
<reference key="11">
    <citation type="journal article" date="2008" name="J. Mol. Biol.">
        <title>The Hsp90 inhibitor radicicol interacts with the ATP-binding pocket of bacterial sensor kinase PhoQ.</title>
        <authorList>
            <person name="Guarnieri M.T."/>
            <person name="Zhang L."/>
            <person name="Shen J."/>
            <person name="Zhao R."/>
        </authorList>
    </citation>
    <scope>X-RAY CRYSTALLOGRAPHY (1.9 ANGSTROMS) OF 332-487 IN THE PRESENCE AND ABSENCE OF INHIBITOR</scope>
    <scope>ACTIVITY REGULATION</scope>
    <scope>AUTOPHOSPHORYLATION</scope>
</reference>
<evidence type="ECO:0000250" key="1"/>
<evidence type="ECO:0000255" key="2"/>
<evidence type="ECO:0000255" key="3">
    <source>
        <dbReference type="PROSITE-ProRule" id="PRU00102"/>
    </source>
</evidence>
<evidence type="ECO:0000255" key="4">
    <source>
        <dbReference type="PROSITE-ProRule" id="PRU00107"/>
    </source>
</evidence>
<evidence type="ECO:0000269" key="5">
    <source>
    </source>
</evidence>
<evidence type="ECO:0000269" key="6">
    <source>
    </source>
</evidence>
<evidence type="ECO:0000269" key="7">
    <source>
    </source>
</evidence>
<evidence type="ECO:0000269" key="8">
    <source>
    </source>
</evidence>
<evidence type="ECO:0000269" key="9">
    <source>
    </source>
</evidence>
<evidence type="ECO:0000269" key="10">
    <source>
    </source>
</evidence>
<evidence type="ECO:0000269" key="11">
    <source>
    </source>
</evidence>
<evidence type="ECO:0000269" key="12">
    <source>
    </source>
</evidence>
<evidence type="ECO:0000269" key="13">
    <source>
    </source>
</evidence>
<evidence type="ECO:0000269" key="14">
    <source>
    </source>
</evidence>
<evidence type="ECO:0000303" key="15">
    <source>
    </source>
</evidence>
<evidence type="ECO:0000305" key="16"/>
<evidence type="ECO:0007829" key="17">
    <source>
        <dbReference type="PDB" id="3CGZ"/>
    </source>
</evidence>
<evidence type="ECO:0007829" key="18">
    <source>
        <dbReference type="PDB" id="4UEY"/>
    </source>
</evidence>
<comment type="function">
    <text evidence="8 12 14">Member of the two-component regulatory system PhoP/PhoQ which regulates the expression of genes involved in virulence, adaptation to acidic and low Mg(2+) environments and resistance to host defense antimicrobial peptides. Essential for intramacrophage survival of S.typhimurium. In low periplasmic Mg(2+), PhoQ functions as a membrane-associated protein kinase that undergoes autophosphorylation and subsequently transfers the phosphate to PhoP, resulting in the expression of PhoP-activated genes (PAG) and repression of PhoP-repressed genes (PRG). In high periplasmic Mg(2+), acts as a protein phosphatase that dephosphorylates phospho-PhoP, resulting in the repression of PAG and may lead to expression of some PRG. Essential for transcription of spiC inside macrophages by controlling the expression of the two-component regulatory system SsrB/SpiR (SsrA) and Pir at transcriptional and post-transcriptional levels respectively. Promotes expression of the two-component regulatory system PmrA/PmrB via activation of pmrD gene. Is required to attenuate bacterial growth within fibroblast cells and to enhance bacterial resistance to bile in intestinal cells. Negatively regulates prgH, which is required for invasion of epithelial cells. Involved in acid tolerance.</text>
</comment>
<comment type="catalytic activity">
    <reaction evidence="6 7">
        <text>ATP + protein L-histidine = ADP + protein N-phospho-L-histidine.</text>
        <dbReference type="EC" id="2.7.13.3"/>
    </reaction>
</comment>
<comment type="cofactor">
    <cofactor evidence="9">
        <name>Ca(2+)</name>
        <dbReference type="ChEBI" id="CHEBI:29108"/>
    </cofactor>
    <cofactor evidence="9">
        <name>Mg(2+)</name>
        <dbReference type="ChEBI" id="CHEBI:18420"/>
    </cofactor>
    <text evidence="9">Binds up to 3 divalent cations (Ca(2+) or Mg(2+)); increasing concentrations of divalent cations allows better binding to phospholipids.</text>
</comment>
<comment type="activity regulation">
    <text evidence="5 8 10">Autokinase and kinase activities depend on low (uM range) Mg(2+) concentrations. Phosphatase activity is stimulated by high (mM range) Mg(2+) concentrations and ADP at 1 mM. Autokinase inhibited by radicicol.</text>
</comment>
<comment type="subunit">
    <text evidence="1">Homodimer (Probable); probably dimerizes via the cytoplasmic domain. Interacts with MgrB in the periplasm, altering its activity and that of downstream effector PhoP (By similarity).</text>
</comment>
<comment type="subcellular location">
    <subcellularLocation>
        <location evidence="1">Cell inner membrane</location>
        <topology evidence="1">Multi-pass membrane protein</topology>
    </subcellularLocation>
</comment>
<comment type="induction">
    <text>The phoP/phoQ operon is positively autoregulated by both PhoP and PhoQ in a Mg(2+)-dependent manner. Repressed by RcsB via sigma factor RpoS.</text>
</comment>
<comment type="disruption phenotype">
    <text evidence="11 12 13 14">Abnormal expression of genes encoding virulence proteins (PubMed:19229334, PubMed:32413287). Decreased tolerance to acid stress (PubMed:9573193). Decreases fitness in the spleen of mouse (PubMed:32413287). 10,000-fold reduction in virulence in male BALB/c mice (for strain ATCC 14028) (PubMed:2544889). Double knockout with phoP decreases virulence in mouse (PubMed:19229334).</text>
</comment>
<comment type="miscellaneous">
    <text>Substitutions experiments show that amino acid Thr-48 may be involved in the conformational changes responsible for the balance between kinase-dominant state and phosphatase-dominant state.</text>
</comment>
<comment type="miscellaneous">
    <text evidence="16">The PhoP/PhoQ-signaling cascade, which activates virulence membrane genes (pagC, pagO, pagD, pagK, pgtE and phoN), is induced by cationic antimicrobial peptides (CAMP) (polymyxin, alpha-helical peptide C18G and sheet peptide protegrin-1) at sublethal concentrations.</text>
</comment>
<sequence length="487" mass="55467">MNKFARHFLPLSLRVRFLLATAGVVLVLSLAYGIVALVGYSVSFDKTTFRLLRGESNLFYTLAKWENNKISVELPENLDMQSPTMTLIYDETGKLLWTQRNIPWLIKSIQPEWLKTNGFHEIETNVDATSTLLSEDHSAQEKLKEVREDDDDAEMTHSVAVNIYPATARMPQLTIVVVDTIPIELKRSYMVWSWFVYVLAANLLLVIPLLWIAAWWSLRPIEALAREVRELEDHHREMLNPETTRELTSLVRNLNQLLKSERERYNKYRTTLTDLTHSLKTPLAVLQSTLRSLRNEKMSVSKAEPVMLEQISRISQQIGYYLHRASMRGSGVLLSRELHPVAPLLDNLISALNKVYQRKGVNISMDISPEISFVGEQNDFVEVMGNVLDNACKYCLEFVEISARQTDDHLHIFVEDDGPGIPHSKRSLVFDRGQRADTLRPGQGVGLAVAREITEQYAGQIIASDSLLGGARMEVVFGRQHPTQKEE</sequence>
<feature type="chain" id="PRO_0000074843" description="Virulence sensor histidine kinase PhoQ">
    <location>
        <begin position="1"/>
        <end position="487"/>
    </location>
</feature>
<feature type="topological domain" description="Cytoplasmic" evidence="2">
    <location>
        <begin position="1"/>
        <end position="16"/>
    </location>
</feature>
<feature type="transmembrane region" description="Helical" evidence="2">
    <location>
        <begin position="17"/>
        <end position="37"/>
    </location>
</feature>
<feature type="topological domain" description="Periplasmic" evidence="2">
    <location>
        <begin position="38"/>
        <end position="193"/>
    </location>
</feature>
<feature type="transmembrane region" description="Helical" evidence="2">
    <location>
        <begin position="194"/>
        <end position="214"/>
    </location>
</feature>
<feature type="topological domain" description="Cytoplasmic" evidence="2">
    <location>
        <begin position="215"/>
        <end position="487"/>
    </location>
</feature>
<feature type="domain" description="HAMP" evidence="3">
    <location>
        <begin position="215"/>
        <end position="266"/>
    </location>
</feature>
<feature type="domain" description="Histidine kinase" evidence="4">
    <location>
        <begin position="274"/>
        <end position="481"/>
    </location>
</feature>
<feature type="binding site" evidence="1">
    <location>
        <position position="151"/>
    </location>
    <ligand>
        <name>a divalent metal cation</name>
        <dbReference type="ChEBI" id="CHEBI:60240"/>
    </ligand>
</feature>
<feature type="binding site" evidence="1">
    <location>
        <position position="152"/>
    </location>
    <ligand>
        <name>a divalent metal cation</name>
        <dbReference type="ChEBI" id="CHEBI:60240"/>
    </ligand>
</feature>
<feature type="binding site" evidence="1">
    <location>
        <begin position="386"/>
        <end position="394"/>
    </location>
    <ligand>
        <name>ATP</name>
        <dbReference type="ChEBI" id="CHEBI:30616"/>
    </ligand>
</feature>
<feature type="binding site" evidence="1">
    <location>
        <position position="386"/>
    </location>
    <ligand>
        <name>Mg(2+)</name>
        <dbReference type="ChEBI" id="CHEBI:18420"/>
    </ligand>
</feature>
<feature type="binding site" evidence="16">
    <location>
        <begin position="416"/>
        <end position="421"/>
    </location>
    <ligand>
        <name>ATP</name>
        <dbReference type="ChEBI" id="CHEBI:30616"/>
    </ligand>
</feature>
<feature type="binding site" evidence="1">
    <location>
        <begin position="435"/>
        <end position="447"/>
    </location>
    <ligand>
        <name>ATP</name>
        <dbReference type="ChEBI" id="CHEBI:30616"/>
    </ligand>
</feature>
<feature type="binding site" evidence="1">
    <location>
        <position position="443"/>
    </location>
    <ligand>
        <name>Mg(2+)</name>
        <dbReference type="ChEBI" id="CHEBI:18420"/>
    </ligand>
</feature>
<feature type="site" description="Plays a critical role in the switching between kinase and phosphatase states" evidence="1">
    <location>
        <position position="202"/>
    </location>
</feature>
<feature type="modified residue" description="Phosphohistidine; by autocatalysis" evidence="4 6">
    <location>
        <position position="277"/>
    </location>
</feature>
<feature type="sequence variant" description="In strain: ATCC 10428.">
    <location>
        <begin position="82"/>
        <end position="99"/>
    </location>
</feature>
<feature type="sequence variant" description="In strain: ATCC 10428.">
    <location>
        <begin position="442"/>
        <end position="459"/>
    </location>
</feature>
<feature type="mutagenesis site" description="Confers to cells a PhoP wild-type phenotype. No effect on net phosphorylation of PhoP. Decreases 5-fold initial rate of autophosphorylation and increases phosphatase activity." evidence="7">
    <original>T</original>
    <variation>A</variation>
    <location>
        <position position="48"/>
    </location>
</feature>
<feature type="mutagenesis site" description="In pho-24; low affinity for Ca(2+). Confers to cells a PhoP constitutively active phenotype. Affects PhoP/PhoQ-signaling cascade and increase net phosphorylation of PhoP. No effect on initial rate of autophosphorylation and decreases phosphatase activity." evidence="7">
    <original>T</original>
    <variation>I</variation>
    <location>
        <position position="48"/>
    </location>
</feature>
<feature type="mutagenesis site" description="Confers to cells a PhoP constitutively inactive phenotype. Affects PhoP/PhoQ-signaling cascade but no significantly effect on net phosphorylation of PhoP. Decreases 3-fold initial rate of autophosphorylation and increases phosphatase activity." evidence="7">
    <original>T</original>
    <variation>L</variation>
    <location>
        <position position="48"/>
    </location>
</feature>
<feature type="mutagenesis site" description="Confers to cells a PhoP wild-type phenotype. No effect on net phosphorylation of PhoP. Decreases 5-fold initial rate of autophosphorylation and shows a wild-type phosphatase activity." evidence="7">
    <original>T</original>
    <variation>S</variation>
    <location>
        <position position="48"/>
    </location>
</feature>
<feature type="mutagenesis site" description="Confers to cells a PhoP constitutively active phenotype. Affects PhoP/PhoQ-signaling cascade and increases net phosphorylation of PhoP. No effect on initial rate of autophosphorylation and decreases phosphatase activity." evidence="7">
    <original>T</original>
    <variation>V</variation>
    <location>
        <position position="48"/>
    </location>
</feature>
<feature type="mutagenesis site" description="Impaired PhoP repression by high concentrations of divalent cations." evidence="9">
    <original>DD</original>
    <variation>KK</variation>
    <location>
        <begin position="149"/>
        <end position="150"/>
    </location>
</feature>
<feature type="mutagenesis site" description="Impaired PhoP repression by high concentrations of divalent cations." evidence="9">
    <original>M</original>
    <variation>I</variation>
    <location>
        <position position="155"/>
    </location>
</feature>
<feature type="mutagenesis site" description="Impaired PhoP repression by high concentrations of divalent cations." evidence="9">
    <original>T</original>
    <variation>K</variation>
    <location>
        <position position="156"/>
    </location>
</feature>
<feature type="mutagenesis site" description="Impaired PhoP repression by high concentrations of divalent cations." evidence="9">
    <original>H</original>
    <variation>R</variation>
    <location>
        <position position="157"/>
    </location>
</feature>
<feature type="mutagenesis site" description="Impaired PhoP repression by high concentrations of divalent cation." evidence="9">
    <original>D</original>
    <variation>L</variation>
    <location>
        <position position="179"/>
    </location>
</feature>
<feature type="mutagenesis site" description="Impaired PhoP repression by high concentrations of divalent cations." evidence="9">
    <original>E</original>
    <variation>K</variation>
    <location>
        <position position="184"/>
    </location>
</feature>
<feature type="mutagenesis site" description="Impaired PhoP repression by high concentrations of divalent cation." evidence="9">
    <original>L</original>
    <variation>A</variation>
    <location>
        <position position="185"/>
    </location>
</feature>
<feature type="mutagenesis site" description="Impaired PhoP repression by high concentrations of divalent cation." evidence="9">
    <original>K</original>
    <variation>A</variation>
    <location>
        <position position="186"/>
    </location>
</feature>
<feature type="mutagenesis site" description="Abolishes autophosphorylation activity." evidence="5 6">
    <original>H</original>
    <variation>N</variation>
    <location>
        <position position="277"/>
    </location>
</feature>
<feature type="mutagenesis site" description="Retains a wild-type Mg(2+) response only at 10 mM in strain PhoP* PhoQ expressing mutant phoP N-93. Loss of autophosphorylation, irrespective of the presence of Mg(2+). Unable to promote phoP dephosphorylation even in presence of added Mg(2+)." evidence="5 6">
    <original>H</original>
    <variation>V</variation>
    <location>
        <position position="277"/>
    </location>
</feature>
<feature type="helix" evidence="18">
    <location>
        <begin position="49"/>
        <end position="62"/>
    </location>
</feature>
<feature type="strand" evidence="18">
    <location>
        <begin position="63"/>
        <end position="66"/>
    </location>
</feature>
<feature type="strand" evidence="18">
    <location>
        <begin position="69"/>
        <end position="72"/>
    </location>
</feature>
<feature type="strand" evidence="18">
    <location>
        <begin position="83"/>
        <end position="90"/>
    </location>
</feature>
<feature type="strand" evidence="18">
    <location>
        <begin position="95"/>
        <end position="100"/>
    </location>
</feature>
<feature type="helix" evidence="18">
    <location>
        <begin position="103"/>
        <end position="108"/>
    </location>
</feature>
<feature type="helix" evidence="18">
    <location>
        <begin position="112"/>
        <end position="115"/>
    </location>
</feature>
<feature type="strand" evidence="18">
    <location>
        <begin position="118"/>
        <end position="125"/>
    </location>
</feature>
<feature type="helix" evidence="18">
    <location>
        <begin position="126"/>
        <end position="132"/>
    </location>
</feature>
<feature type="helix" evidence="18">
    <location>
        <begin position="137"/>
        <end position="149"/>
    </location>
</feature>
<feature type="strand" evidence="18">
    <location>
        <begin position="154"/>
        <end position="164"/>
    </location>
</feature>
<feature type="strand" evidence="18">
    <location>
        <begin position="173"/>
        <end position="181"/>
    </location>
</feature>
<feature type="helix" evidence="18">
    <location>
        <begin position="183"/>
        <end position="185"/>
    </location>
</feature>
<feature type="strand" evidence="17">
    <location>
        <begin position="333"/>
        <end position="335"/>
    </location>
</feature>
<feature type="strand" evidence="17">
    <location>
        <begin position="338"/>
        <end position="340"/>
    </location>
</feature>
<feature type="helix" evidence="17">
    <location>
        <begin position="341"/>
        <end position="355"/>
    </location>
</feature>
<feature type="turn" evidence="17">
    <location>
        <begin position="356"/>
        <end position="360"/>
    </location>
</feature>
<feature type="strand" evidence="17">
    <location>
        <begin position="362"/>
        <end position="366"/>
    </location>
</feature>
<feature type="strand" evidence="17">
    <location>
        <begin position="372"/>
        <end position="375"/>
    </location>
</feature>
<feature type="helix" evidence="17">
    <location>
        <begin position="377"/>
        <end position="394"/>
    </location>
</feature>
<feature type="strand" evidence="17">
    <location>
        <begin position="396"/>
        <end position="406"/>
    </location>
</feature>
<feature type="strand" evidence="17">
    <location>
        <begin position="409"/>
        <end position="418"/>
    </location>
</feature>
<feature type="helix" evidence="17">
    <location>
        <begin position="445"/>
        <end position="447"/>
    </location>
</feature>
<feature type="helix" evidence="17">
    <location>
        <begin position="448"/>
        <end position="456"/>
    </location>
</feature>
<feature type="strand" evidence="17">
    <location>
        <begin position="460"/>
        <end position="465"/>
    </location>
</feature>
<feature type="strand" evidence="17">
    <location>
        <begin position="469"/>
        <end position="477"/>
    </location>
</feature>
<feature type="strand" evidence="17">
    <location>
        <begin position="482"/>
        <end position="485"/>
    </location>
</feature>
<name>PHOQ_SALTY</name>
<proteinExistence type="evidence at protein level"/>
<gene>
    <name type="primary">phoQ</name>
    <name type="synonym">phoZ</name>
    <name type="ordered locus">STM1230</name>
</gene>
<organism>
    <name type="scientific">Salmonella typhimurium (strain LT2 / SGSC1412 / ATCC 700720)</name>
    <dbReference type="NCBI Taxonomy" id="99287"/>
    <lineage>
        <taxon>Bacteria</taxon>
        <taxon>Pseudomonadati</taxon>
        <taxon>Pseudomonadota</taxon>
        <taxon>Gammaproteobacteria</taxon>
        <taxon>Enterobacterales</taxon>
        <taxon>Enterobacteriaceae</taxon>
        <taxon>Salmonella</taxon>
    </lineage>
</organism>
<keyword id="KW-0002">3D-structure</keyword>
<keyword id="KW-0067">ATP-binding</keyword>
<keyword id="KW-0997">Cell inner membrane</keyword>
<keyword id="KW-1003">Cell membrane</keyword>
<keyword id="KW-0341">Growth regulation</keyword>
<keyword id="KW-0378">Hydrolase</keyword>
<keyword id="KW-0418">Kinase</keyword>
<keyword id="KW-0460">Magnesium</keyword>
<keyword id="KW-0472">Membrane</keyword>
<keyword id="KW-0479">Metal-binding</keyword>
<keyword id="KW-0547">Nucleotide-binding</keyword>
<keyword id="KW-0597">Phosphoprotein</keyword>
<keyword id="KW-0904">Protein phosphatase</keyword>
<keyword id="KW-1185">Reference proteome</keyword>
<keyword id="KW-0808">Transferase</keyword>
<keyword id="KW-0812">Transmembrane</keyword>
<keyword id="KW-1133">Transmembrane helix</keyword>
<keyword id="KW-0902">Two-component regulatory system</keyword>
<keyword id="KW-0843">Virulence</keyword>
<dbReference type="EC" id="2.7.13.3"/>
<dbReference type="EC" id="3.1.3.-"/>
<dbReference type="EMBL" id="M24424">
    <property type="protein sequence ID" value="AAA27189.1"/>
    <property type="molecule type" value="Genomic_DNA"/>
</dbReference>
<dbReference type="EMBL" id="AE006468">
    <property type="protein sequence ID" value="AAL20159.1"/>
    <property type="molecule type" value="Genomic_DNA"/>
</dbReference>
<dbReference type="PIR" id="B32932">
    <property type="entry name" value="VZEBPT"/>
</dbReference>
<dbReference type="RefSeq" id="NP_460200.1">
    <property type="nucleotide sequence ID" value="NC_003197.2"/>
</dbReference>
<dbReference type="RefSeq" id="WP_001031687.1">
    <property type="nucleotide sequence ID" value="NC_003197.2"/>
</dbReference>
<dbReference type="PDB" id="1YAX">
    <property type="method" value="X-ray"/>
    <property type="resolution" value="2.40 A"/>
    <property type="chains" value="A/B/C/D=45-190"/>
</dbReference>
<dbReference type="PDB" id="3CGY">
    <property type="method" value="X-ray"/>
    <property type="resolution" value="2.60 A"/>
    <property type="chains" value="A/B/C=332-487"/>
</dbReference>
<dbReference type="PDB" id="3CGZ">
    <property type="method" value="X-ray"/>
    <property type="resolution" value="1.90 A"/>
    <property type="chains" value="A/B/C=332-487"/>
</dbReference>
<dbReference type="PDB" id="4UEY">
    <property type="method" value="X-ray"/>
    <property type="resolution" value="1.90 A"/>
    <property type="chains" value="A/B/C=45-190"/>
</dbReference>
<dbReference type="PDBsum" id="1YAX"/>
<dbReference type="PDBsum" id="3CGY"/>
<dbReference type="PDBsum" id="3CGZ"/>
<dbReference type="PDBsum" id="4UEY"/>
<dbReference type="SMR" id="P0DM80"/>
<dbReference type="STRING" id="99287.STM1230"/>
<dbReference type="BindingDB" id="P0DM80"/>
<dbReference type="ChEMBL" id="CHEMBL6096"/>
<dbReference type="DrugBank" id="DB03758">
    <property type="generic name" value="Radicicol"/>
</dbReference>
<dbReference type="iPTMnet" id="P0DM80"/>
<dbReference type="PaxDb" id="99287-STM1230"/>
<dbReference type="GeneID" id="1252748"/>
<dbReference type="KEGG" id="stm:STM1230"/>
<dbReference type="PATRIC" id="fig|99287.12.peg.1301"/>
<dbReference type="HOGENOM" id="CLU_000445_42_0_6"/>
<dbReference type="OMA" id="TLVFIYD"/>
<dbReference type="PhylomeDB" id="P0DM80"/>
<dbReference type="BioCyc" id="SENT99287:STM1230-MONOMER"/>
<dbReference type="BRENDA" id="2.7.13.3">
    <property type="organism ID" value="5542"/>
</dbReference>
<dbReference type="EvolutionaryTrace" id="P0DM80"/>
<dbReference type="PHI-base" id="PHI:2675"/>
<dbReference type="PHI-base" id="PHI:6592"/>
<dbReference type="Proteomes" id="UP000001014">
    <property type="component" value="Chromosome"/>
</dbReference>
<dbReference type="GO" id="GO:0005886">
    <property type="term" value="C:plasma membrane"/>
    <property type="evidence" value="ECO:0000318"/>
    <property type="project" value="GO_Central"/>
</dbReference>
<dbReference type="GO" id="GO:0005524">
    <property type="term" value="F:ATP binding"/>
    <property type="evidence" value="ECO:0007669"/>
    <property type="project" value="UniProtKB-KW"/>
</dbReference>
<dbReference type="GO" id="GO:0046872">
    <property type="term" value="F:metal ion binding"/>
    <property type="evidence" value="ECO:0007669"/>
    <property type="project" value="UniProtKB-KW"/>
</dbReference>
<dbReference type="GO" id="GO:0004721">
    <property type="term" value="F:phosphoprotein phosphatase activity"/>
    <property type="evidence" value="ECO:0007669"/>
    <property type="project" value="UniProtKB-KW"/>
</dbReference>
<dbReference type="GO" id="GO:0000155">
    <property type="term" value="F:phosphorelay sensor kinase activity"/>
    <property type="evidence" value="ECO:0007669"/>
    <property type="project" value="InterPro"/>
</dbReference>
<dbReference type="GO" id="GO:0000160">
    <property type="term" value="P:phosphorelay signal transduction system"/>
    <property type="evidence" value="ECO:0000318"/>
    <property type="project" value="GO_Central"/>
</dbReference>
<dbReference type="CDD" id="cd16954">
    <property type="entry name" value="HATPase_PhoQ-like"/>
    <property type="match status" value="1"/>
</dbReference>
<dbReference type="FunFam" id="1.10.287.130:FF:000013">
    <property type="entry name" value="Sensor histidine kinase PhoQ"/>
    <property type="match status" value="1"/>
</dbReference>
<dbReference type="FunFam" id="3.30.450.140:FF:000001">
    <property type="entry name" value="Virulence sensor histidine kinase PhoQ"/>
    <property type="match status" value="1"/>
</dbReference>
<dbReference type="FunFam" id="3.30.565.10:FF:000019">
    <property type="entry name" value="Virulence sensor histidine kinase PhoQ"/>
    <property type="match status" value="1"/>
</dbReference>
<dbReference type="Gene3D" id="1.10.287.130">
    <property type="match status" value="1"/>
</dbReference>
<dbReference type="Gene3D" id="3.30.450.140">
    <property type="match status" value="1"/>
</dbReference>
<dbReference type="Gene3D" id="3.30.565.10">
    <property type="entry name" value="Histidine kinase-like ATPase, C-terminal domain"/>
    <property type="match status" value="1"/>
</dbReference>
<dbReference type="InterPro" id="IPR003660">
    <property type="entry name" value="HAMP_dom"/>
</dbReference>
<dbReference type="InterPro" id="IPR036890">
    <property type="entry name" value="HATPase_C_sf"/>
</dbReference>
<dbReference type="InterPro" id="IPR005467">
    <property type="entry name" value="His_kinase_dom"/>
</dbReference>
<dbReference type="InterPro" id="IPR036097">
    <property type="entry name" value="HisK_dim/P_sf"/>
</dbReference>
<dbReference type="InterPro" id="IPR015014">
    <property type="entry name" value="PhoQ_Sensor"/>
</dbReference>
<dbReference type="InterPro" id="IPR038429">
    <property type="entry name" value="PhoQ_Sensor_sf"/>
</dbReference>
<dbReference type="InterPro" id="IPR004358">
    <property type="entry name" value="Sig_transdc_His_kin-like_C"/>
</dbReference>
<dbReference type="InterPro" id="IPR050428">
    <property type="entry name" value="TCS_sensor_his_kinase"/>
</dbReference>
<dbReference type="NCBIfam" id="NF008077">
    <property type="entry name" value="PRK10815.1"/>
    <property type="match status" value="1"/>
</dbReference>
<dbReference type="PANTHER" id="PTHR45436">
    <property type="entry name" value="SENSOR HISTIDINE KINASE YKOH"/>
    <property type="match status" value="1"/>
</dbReference>
<dbReference type="PANTHER" id="PTHR45436:SF4">
    <property type="entry name" value="SENSOR PROTEIN PHOQ"/>
    <property type="match status" value="1"/>
</dbReference>
<dbReference type="Pfam" id="PF02518">
    <property type="entry name" value="HATPase_c"/>
    <property type="match status" value="1"/>
</dbReference>
<dbReference type="Pfam" id="PF08918">
    <property type="entry name" value="PhoQ_Sensor"/>
    <property type="match status" value="1"/>
</dbReference>
<dbReference type="PRINTS" id="PR00344">
    <property type="entry name" value="BCTRLSENSOR"/>
</dbReference>
<dbReference type="SMART" id="SM00387">
    <property type="entry name" value="HATPase_c"/>
    <property type="match status" value="1"/>
</dbReference>
<dbReference type="SUPFAM" id="SSF55874">
    <property type="entry name" value="ATPase domain of HSP90 chaperone/DNA topoisomerase II/histidine kinase"/>
    <property type="match status" value="1"/>
</dbReference>
<dbReference type="SUPFAM" id="SSF47384">
    <property type="entry name" value="Homodimeric domain of signal transducing histidine kinase"/>
    <property type="match status" value="1"/>
</dbReference>
<dbReference type="PROSITE" id="PS50885">
    <property type="entry name" value="HAMP"/>
    <property type="match status" value="1"/>
</dbReference>
<dbReference type="PROSITE" id="PS50109">
    <property type="entry name" value="HIS_KIN"/>
    <property type="match status" value="1"/>
</dbReference>